<feature type="chain" id="PRO_0000334033" description="Cell division protein SepF">
    <location>
        <begin position="1"/>
        <end position="152"/>
    </location>
</feature>
<gene>
    <name evidence="1" type="primary">sepF</name>
    <name type="ordered locus">lmo2030</name>
</gene>
<keyword id="KW-0131">Cell cycle</keyword>
<keyword id="KW-0132">Cell division</keyword>
<keyword id="KW-0963">Cytoplasm</keyword>
<keyword id="KW-1185">Reference proteome</keyword>
<keyword id="KW-0717">Septation</keyword>
<name>SEPF_LISMO</name>
<organism>
    <name type="scientific">Listeria monocytogenes serovar 1/2a (strain ATCC BAA-679 / EGD-e)</name>
    <dbReference type="NCBI Taxonomy" id="169963"/>
    <lineage>
        <taxon>Bacteria</taxon>
        <taxon>Bacillati</taxon>
        <taxon>Bacillota</taxon>
        <taxon>Bacilli</taxon>
        <taxon>Bacillales</taxon>
        <taxon>Listeriaceae</taxon>
        <taxon>Listeria</taxon>
    </lineage>
</organism>
<reference key="1">
    <citation type="journal article" date="2001" name="Science">
        <title>Comparative genomics of Listeria species.</title>
        <authorList>
            <person name="Glaser P."/>
            <person name="Frangeul L."/>
            <person name="Buchrieser C."/>
            <person name="Rusniok C."/>
            <person name="Amend A."/>
            <person name="Baquero F."/>
            <person name="Berche P."/>
            <person name="Bloecker H."/>
            <person name="Brandt P."/>
            <person name="Chakraborty T."/>
            <person name="Charbit A."/>
            <person name="Chetouani F."/>
            <person name="Couve E."/>
            <person name="de Daruvar A."/>
            <person name="Dehoux P."/>
            <person name="Domann E."/>
            <person name="Dominguez-Bernal G."/>
            <person name="Duchaud E."/>
            <person name="Durant L."/>
            <person name="Dussurget O."/>
            <person name="Entian K.-D."/>
            <person name="Fsihi H."/>
            <person name="Garcia-del Portillo F."/>
            <person name="Garrido P."/>
            <person name="Gautier L."/>
            <person name="Goebel W."/>
            <person name="Gomez-Lopez N."/>
            <person name="Hain T."/>
            <person name="Hauf J."/>
            <person name="Jackson D."/>
            <person name="Jones L.-M."/>
            <person name="Kaerst U."/>
            <person name="Kreft J."/>
            <person name="Kuhn M."/>
            <person name="Kunst F."/>
            <person name="Kurapkat G."/>
            <person name="Madueno E."/>
            <person name="Maitournam A."/>
            <person name="Mata Vicente J."/>
            <person name="Ng E."/>
            <person name="Nedjari H."/>
            <person name="Nordsiek G."/>
            <person name="Novella S."/>
            <person name="de Pablos B."/>
            <person name="Perez-Diaz J.-C."/>
            <person name="Purcell R."/>
            <person name="Remmel B."/>
            <person name="Rose M."/>
            <person name="Schlueter T."/>
            <person name="Simoes N."/>
            <person name="Tierrez A."/>
            <person name="Vazquez-Boland J.-A."/>
            <person name="Voss H."/>
            <person name="Wehland J."/>
            <person name="Cossart P."/>
        </authorList>
    </citation>
    <scope>NUCLEOTIDE SEQUENCE [LARGE SCALE GENOMIC DNA]</scope>
    <source>
        <strain>ATCC BAA-679 / EGD-e</strain>
    </source>
</reference>
<proteinExistence type="inferred from homology"/>
<comment type="function">
    <text evidence="1">Cell division protein that is part of the divisome complex and is recruited early to the Z-ring. Probably stimulates Z-ring formation, perhaps through the cross-linking of FtsZ protofilaments. Its function overlaps with FtsA.</text>
</comment>
<comment type="subunit">
    <text evidence="1">Homodimer. Interacts with FtsZ.</text>
</comment>
<comment type="subcellular location">
    <subcellularLocation>
        <location evidence="1">Cytoplasm</location>
    </subcellularLocation>
    <text evidence="1">Localizes to the division site, in a FtsZ-dependent manner.</text>
</comment>
<comment type="similarity">
    <text evidence="1">Belongs to the SepF family.</text>
</comment>
<evidence type="ECO:0000255" key="1">
    <source>
        <dbReference type="HAMAP-Rule" id="MF_01197"/>
    </source>
</evidence>
<sequence length="152" mass="17514">MGLSNKFKSFFFLDEEEEYYEEEVAREPEPMQKKTKKEKPNKNRFYAVEEDDAKVVSMQGAQFSSRMVLAEPRVYAEAQELADYLKEYKSVVVNLQRISHDQATRIVDFLSGTVYALGGDIQRVGNNIFLCTPDNVEVDGSISEMLDEQNFM</sequence>
<accession>Q8Y5M7</accession>
<dbReference type="EMBL" id="AL591982">
    <property type="protein sequence ID" value="CAD00108.1"/>
    <property type="molecule type" value="Genomic_DNA"/>
</dbReference>
<dbReference type="PIR" id="AF1328">
    <property type="entry name" value="AF1328"/>
</dbReference>
<dbReference type="RefSeq" id="NP_465554.1">
    <property type="nucleotide sequence ID" value="NC_003210.1"/>
</dbReference>
<dbReference type="RefSeq" id="WP_003724067.1">
    <property type="nucleotide sequence ID" value="NZ_CP149495.1"/>
</dbReference>
<dbReference type="SMR" id="Q8Y5M7"/>
<dbReference type="STRING" id="169963.gene:17594715"/>
<dbReference type="PaxDb" id="169963-lmo2030"/>
<dbReference type="DNASU" id="984817"/>
<dbReference type="EnsemblBacteria" id="CAD00108">
    <property type="protein sequence ID" value="CAD00108"/>
    <property type="gene ID" value="CAD00108"/>
</dbReference>
<dbReference type="GeneID" id="984817"/>
<dbReference type="KEGG" id="lmo:lmo2030"/>
<dbReference type="PATRIC" id="fig|169963.11.peg.2078"/>
<dbReference type="eggNOG" id="COG1799">
    <property type="taxonomic scope" value="Bacteria"/>
</dbReference>
<dbReference type="HOGENOM" id="CLU_078499_4_1_9"/>
<dbReference type="OrthoDB" id="9815206at2"/>
<dbReference type="PhylomeDB" id="Q8Y5M7"/>
<dbReference type="BioCyc" id="LMON169963:LMO2030-MONOMER"/>
<dbReference type="Proteomes" id="UP000000817">
    <property type="component" value="Chromosome"/>
</dbReference>
<dbReference type="GO" id="GO:0005737">
    <property type="term" value="C:cytoplasm"/>
    <property type="evidence" value="ECO:0007669"/>
    <property type="project" value="UniProtKB-SubCell"/>
</dbReference>
<dbReference type="GO" id="GO:0000917">
    <property type="term" value="P:division septum assembly"/>
    <property type="evidence" value="ECO:0007669"/>
    <property type="project" value="UniProtKB-KW"/>
</dbReference>
<dbReference type="GO" id="GO:0043093">
    <property type="term" value="P:FtsZ-dependent cytokinesis"/>
    <property type="evidence" value="ECO:0007669"/>
    <property type="project" value="UniProtKB-UniRule"/>
</dbReference>
<dbReference type="Gene3D" id="3.30.110.150">
    <property type="entry name" value="SepF-like protein"/>
    <property type="match status" value="1"/>
</dbReference>
<dbReference type="HAMAP" id="MF_01197">
    <property type="entry name" value="SepF"/>
    <property type="match status" value="1"/>
</dbReference>
<dbReference type="InterPro" id="IPR023052">
    <property type="entry name" value="Cell_div_SepF"/>
</dbReference>
<dbReference type="InterPro" id="IPR007561">
    <property type="entry name" value="Cell_div_SepF/SepF-rel"/>
</dbReference>
<dbReference type="InterPro" id="IPR038594">
    <property type="entry name" value="SepF-like_sf"/>
</dbReference>
<dbReference type="PANTHER" id="PTHR35798">
    <property type="entry name" value="CELL DIVISION PROTEIN SEPF"/>
    <property type="match status" value="1"/>
</dbReference>
<dbReference type="PANTHER" id="PTHR35798:SF1">
    <property type="entry name" value="CELL DIVISION PROTEIN SEPF"/>
    <property type="match status" value="1"/>
</dbReference>
<dbReference type="Pfam" id="PF04472">
    <property type="entry name" value="SepF"/>
    <property type="match status" value="1"/>
</dbReference>
<protein>
    <recommendedName>
        <fullName evidence="1">Cell division protein SepF</fullName>
    </recommendedName>
</protein>